<evidence type="ECO:0000250" key="1">
    <source>
        <dbReference type="UniProtKB" id="A0A146I0C4"/>
    </source>
</evidence>
<evidence type="ECO:0000250" key="2">
    <source>
        <dbReference type="UniProtKB" id="A6T923"/>
    </source>
</evidence>
<evidence type="ECO:0000250" key="3">
    <source>
        <dbReference type="UniProtKB" id="B8M9J8"/>
    </source>
</evidence>
<evidence type="ECO:0000255" key="4"/>
<evidence type="ECO:0000269" key="5">
    <source>
    </source>
</evidence>
<evidence type="ECO:0000303" key="6">
    <source>
    </source>
</evidence>
<evidence type="ECO:0000305" key="7"/>
<proteinExistence type="inferred from homology"/>
<sequence>MKSSPGLHIIIVGAGITGLATATSLRRAGHTVHLYEKSAQDNEIGAAIYVPPNVSQFLLPWGLDLDKWGFVKSQKVSFLHHASLETKMTLSDGMTAKGLTGAELYYAHRVDLHGCLRWMATRPEGPGRPATIHLMSNVVAYDPLAPSITLASGEVISADVVIGADGVRSDAVEAIIGDKVQTMRPRFANTCYRFLVPADAIEADPATQFWNEGSDGWSRVMIESVTGRSVVSYPCRSNTIHNFVLINNEENDTNMCAEDWHARFKIPDILKKFSDYDPRLLKVLSKAPDARRWPLIYRKPIHQWTKGCMTLAGDACHAMLPFLAQGGAQGIEDAVALGVVLQGATTRDDIQKRLQIYQEVRMKRASIIQILSNMGADHSVSVEDLKEYLNEDQMPYSQHDMMIHNYKYDVAEVAFEAMKRYDPSFRLGNDFLGR</sequence>
<reference key="1">
    <citation type="submission" date="2017-12" db="EMBL/GenBank/DDBJ databases">
        <authorList>
            <consortium name="DOE Joint Genome Institute"/>
            <person name="Haridas S."/>
            <person name="Kjaerbolling I."/>
            <person name="Vesth T.C."/>
            <person name="Frisvad J.C."/>
            <person name="Nybo J.L."/>
            <person name="Theobald S."/>
            <person name="Kuo A."/>
            <person name="Bowyer P."/>
            <person name="Matsuda Y."/>
            <person name="Mondo S."/>
            <person name="Lyhne E.K."/>
            <person name="Kogle M.E."/>
            <person name="Clum A."/>
            <person name="Lipzen A."/>
            <person name="Salamov A."/>
            <person name="Ngan C.Y."/>
            <person name="Daum C."/>
            <person name="Chiniquy J."/>
            <person name="Barry K."/>
            <person name="LaButti K."/>
            <person name="Simmons B.A."/>
            <person name="Magnuson J.K."/>
            <person name="Mortensen U.H."/>
            <person name="Larsen T.O."/>
            <person name="Grigoriev I.V."/>
            <person name="Baker S.E."/>
            <person name="Andersen M.R."/>
            <person name="Nordberg H.P."/>
            <person name="Cantor M.N."/>
            <person name="Hua S.X."/>
        </authorList>
    </citation>
    <scope>NUCLEOTIDE SEQUENCE [LARGE SCALE GENOMIC DNA]</scope>
    <source>
        <strain>CBS 102.13</strain>
    </source>
</reference>
<reference key="2">
    <citation type="journal article" date="2023" name="Angew. Chem. Int. Ed.">
        <title>Discovery of a Unique Flavonoid Biosynthesis Mechanism in Fungi by Genome Mining.</title>
        <authorList>
            <person name="Zhang W."/>
            <person name="Zhang X."/>
            <person name="Feng D."/>
            <person name="Liang Y."/>
            <person name="Wu Z."/>
            <person name="Du S."/>
            <person name="Zhou Y."/>
            <person name="Geng C."/>
            <person name="Men P."/>
            <person name="Fu C."/>
            <person name="Huang X."/>
            <person name="Lu X."/>
        </authorList>
    </citation>
    <scope>FUNCTION</scope>
    <scope>DISRUPTION PHENOTYPE</scope>
    <scope>PATHWAY</scope>
</reference>
<gene>
    <name evidence="6" type="primary">cfoG</name>
    <name type="ORF">BDW47DRAFT_133985</name>
</gene>
<keyword id="KW-0274">FAD</keyword>
<keyword id="KW-0284">Flavonoid biosynthesis</keyword>
<keyword id="KW-0285">Flavoprotein</keyword>
<keyword id="KW-0503">Monooxygenase</keyword>
<keyword id="KW-0560">Oxidoreductase</keyword>
<keyword id="KW-1185">Reference proteome</keyword>
<keyword id="KW-0732">Signal</keyword>
<organism>
    <name type="scientific">Aspergillus candidus</name>
    <dbReference type="NCBI Taxonomy" id="41067"/>
    <lineage>
        <taxon>Eukaryota</taxon>
        <taxon>Fungi</taxon>
        <taxon>Dikarya</taxon>
        <taxon>Ascomycota</taxon>
        <taxon>Pezizomycotina</taxon>
        <taxon>Eurotiomycetes</taxon>
        <taxon>Eurotiomycetidae</taxon>
        <taxon>Eurotiales</taxon>
        <taxon>Aspergillaceae</taxon>
        <taxon>Aspergillus</taxon>
        <taxon>Aspergillus subgen. Circumdati</taxon>
    </lineage>
</organism>
<feature type="signal peptide" evidence="4">
    <location>
        <begin position="1"/>
        <end position="22"/>
    </location>
</feature>
<feature type="chain" id="PRO_0000459544" description="FAD-dependent monooxygenase cfoG">
    <location>
        <begin position="23"/>
        <end position="434"/>
    </location>
</feature>
<feature type="active site" evidence="3">
    <location>
        <position position="193"/>
    </location>
</feature>
<feature type="active site" evidence="3">
    <location>
        <position position="233"/>
    </location>
</feature>
<feature type="binding site" evidence="3">
    <location>
        <position position="36"/>
    </location>
    <ligand>
        <name>FAD</name>
        <dbReference type="ChEBI" id="CHEBI:57692"/>
    </ligand>
</feature>
<feature type="binding site" evidence="3">
    <location>
        <position position="314"/>
    </location>
    <ligand>
        <name>FAD</name>
        <dbReference type="ChEBI" id="CHEBI:57692"/>
    </ligand>
</feature>
<feature type="binding site" evidence="3">
    <location>
        <position position="327"/>
    </location>
    <ligand>
        <name>FAD</name>
        <dbReference type="ChEBI" id="CHEBI:57692"/>
    </ligand>
</feature>
<protein>
    <recommendedName>
        <fullName evidence="6">FAD-dependent monooxygenase cfoG</fullName>
        <ecNumber evidence="5">1.-.-.-</ecNumber>
    </recommendedName>
    <alternativeName>
        <fullName evidence="6">Chlorflavonin biosynthesis cluster protein G</fullName>
    </alternativeName>
</protein>
<dbReference type="EC" id="1.-.-.-" evidence="5"/>
<dbReference type="EMBL" id="KZ559171">
    <property type="protein sequence ID" value="PLB34866.1"/>
    <property type="molecule type" value="Genomic_DNA"/>
</dbReference>
<dbReference type="SMR" id="A0A2I2F2Q7"/>
<dbReference type="STRING" id="41067.A0A2I2F2Q7"/>
<dbReference type="OrthoDB" id="9993796at2759"/>
<dbReference type="UniPathway" id="UPA00154"/>
<dbReference type="Proteomes" id="UP000234585">
    <property type="component" value="Unassembled WGS sequence"/>
</dbReference>
<dbReference type="GO" id="GO:0071949">
    <property type="term" value="F:FAD binding"/>
    <property type="evidence" value="ECO:0007669"/>
    <property type="project" value="InterPro"/>
</dbReference>
<dbReference type="GO" id="GO:0004497">
    <property type="term" value="F:monooxygenase activity"/>
    <property type="evidence" value="ECO:0007669"/>
    <property type="project" value="UniProtKB-KW"/>
</dbReference>
<dbReference type="GO" id="GO:0009813">
    <property type="term" value="P:flavonoid biosynthetic process"/>
    <property type="evidence" value="ECO:0007669"/>
    <property type="project" value="UniProtKB-UniPathway"/>
</dbReference>
<dbReference type="Gene3D" id="3.50.50.60">
    <property type="entry name" value="FAD/NAD(P)-binding domain"/>
    <property type="match status" value="1"/>
</dbReference>
<dbReference type="InterPro" id="IPR002938">
    <property type="entry name" value="FAD-bd"/>
</dbReference>
<dbReference type="InterPro" id="IPR050493">
    <property type="entry name" value="FAD-dep_Monooxygenase_BioMet"/>
</dbReference>
<dbReference type="InterPro" id="IPR036188">
    <property type="entry name" value="FAD/NAD-bd_sf"/>
</dbReference>
<dbReference type="PANTHER" id="PTHR13789:SF215">
    <property type="entry name" value="FAD-BINDING DOMAIN-CONTAINING PROTEIN-RELATED"/>
    <property type="match status" value="1"/>
</dbReference>
<dbReference type="PANTHER" id="PTHR13789">
    <property type="entry name" value="MONOOXYGENASE"/>
    <property type="match status" value="1"/>
</dbReference>
<dbReference type="Pfam" id="PF01494">
    <property type="entry name" value="FAD_binding_3"/>
    <property type="match status" value="1"/>
</dbReference>
<dbReference type="Pfam" id="PF13450">
    <property type="entry name" value="NAD_binding_8"/>
    <property type="match status" value="1"/>
</dbReference>
<dbReference type="PRINTS" id="PR00420">
    <property type="entry name" value="RNGMNOXGNASE"/>
</dbReference>
<dbReference type="SUPFAM" id="SSF54373">
    <property type="entry name" value="FAD-linked reductases, C-terminal domain"/>
    <property type="match status" value="1"/>
</dbReference>
<dbReference type="SUPFAM" id="SSF51905">
    <property type="entry name" value="FAD/NAD(P)-binding domain"/>
    <property type="match status" value="1"/>
</dbReference>
<name>CFOG_ASPCN</name>
<accession>A0A2I2F2Q7</accession>
<comment type="function">
    <text evidence="5">Monooxygenase; part of the gene cluster that mediates the biosynthesis of chlorflavonin, a fungal flavonoid with acetolactate synthase inhibitory activity (PubMed:36704842). Within the pathway, cfoG is responsible for the hydroxylation of the flavonoid skeleton at position C8 (PubMed:36704842). The pathway begins with the PKS-NRPS hybrid synthetase cfoA that uses benzoic acid or p-hydroxybenzoic acid as a starter unit with four rounds of chain elongation using malonyl-CoA to form the chalcone skeleton. Then, a new type of chalcone isomerase, cfoK, catalyzes the conversion of the chalcone into a flavanone by a histidine-mediated oxa-Michael addition mechanism. The desaturation of flavanone to flavone is catalyzed by a new type of flavone synthase, the flavin mononucleotide (FMN)-dependent oxidoreductase cfoJ. Monooxygenases cfoF, cfoG, and P450 cfoH are responsible for the hydroxylation of the flavonoid skeleton at sites C3, C8, and C2', respectively. Like cfoF, the dehydratase cfoI plays also a role in the hydroxylation of position C3. Methyltransferases cfoB, cfoC, and cfoD then catalyze the methylation of C7-OH, C8-OH, and C3-OH, respectively. Finally, the monooxygenase cfoE is responsible for the chlorination of flavonoid at position C3' (PubMed:36704842).</text>
</comment>
<comment type="cofactor">
    <cofactor evidence="2">
        <name>FAD</name>
        <dbReference type="ChEBI" id="CHEBI:57692"/>
    </cofactor>
</comment>
<comment type="pathway">
    <text evidence="5">Secondary metabolite biosynthesis; flavonoid biosynthesis.</text>
</comment>
<comment type="subunit">
    <text evidence="1">Monomer.</text>
</comment>
<comment type="disruption phenotype">
    <text evidence="5">Impairs the hydroxylation of the flavonoid skeleton at position C8.</text>
</comment>
<comment type="similarity">
    <text evidence="7">Belongs to the paxM FAD-dependent monooxygenase family.</text>
</comment>